<name>HTPG_RICBR</name>
<organism>
    <name type="scientific">Rickettsia bellii (strain RML369-C)</name>
    <dbReference type="NCBI Taxonomy" id="336407"/>
    <lineage>
        <taxon>Bacteria</taxon>
        <taxon>Pseudomonadati</taxon>
        <taxon>Pseudomonadota</taxon>
        <taxon>Alphaproteobacteria</taxon>
        <taxon>Rickettsiales</taxon>
        <taxon>Rickettsiaceae</taxon>
        <taxon>Rickettsieae</taxon>
        <taxon>Rickettsia</taxon>
        <taxon>belli group</taxon>
    </lineage>
</organism>
<sequence>MKQEKKKFDAEVGKILNLMIHSLYSNKEIFMRELISNASDACDKLRYLSQSEAELVAGDSNFKITVKGDKNNGQVIIRDNGIGMNKEDLIENLGTIARSGTANFLKNLSGDSKKDNMLIGQFGVGFYSSFMVADKVTVTSRKAGEDKVYVWESEGEGEYIVSSSDREFSRGTEIALHIKKEEDSFLDHFRLKHIVKSYSDHIAVPIYFFDEGDNNEIQLNSASALWTRSKSEITEEQYKEFYKSLSYAVDDPWVTMHNKNEGAIEFTNLLFIPSSKTYDLFHPDRKRRVKLYIKRVFISDENIDLIPSYLRFLRGVVDSEDLPLNISRESLQHNNVLEKIKNAITKRVLGELKKKKEDSPDEYNNFWANFGGALKEGLCEATTDHEKLLEVCIFRSALHNKMISLDEYIKGFKEGQNTIYYLSGDNPDKLLSSPQIEGLLSKNIDVLLFTDTVDDFWVNVNSEYKGHTIKSATRSDIDVDQATSSSEEKNKDDKKSDDEYKSLTDYFKEVLGILVKDVKISKKLTSSPACLAVSEAAMDIRMERFLIEQKQIANASAKNLELNPKNKIIEKIFNDLKANNKNNEELVKLIFDQACILEGEPVADTGAFSKRLNDIVQKAIL</sequence>
<dbReference type="EMBL" id="CP000087">
    <property type="protein sequence ID" value="ABE04713.1"/>
    <property type="molecule type" value="Genomic_DNA"/>
</dbReference>
<dbReference type="RefSeq" id="WP_011477301.1">
    <property type="nucleotide sequence ID" value="NC_007940.1"/>
</dbReference>
<dbReference type="SMR" id="Q1RIV1"/>
<dbReference type="KEGG" id="rbe:RBE_0632"/>
<dbReference type="eggNOG" id="COG0326">
    <property type="taxonomic scope" value="Bacteria"/>
</dbReference>
<dbReference type="HOGENOM" id="CLU_006684_3_0_5"/>
<dbReference type="OrthoDB" id="9802640at2"/>
<dbReference type="Proteomes" id="UP000001951">
    <property type="component" value="Chromosome"/>
</dbReference>
<dbReference type="GO" id="GO:0005737">
    <property type="term" value="C:cytoplasm"/>
    <property type="evidence" value="ECO:0007669"/>
    <property type="project" value="UniProtKB-SubCell"/>
</dbReference>
<dbReference type="GO" id="GO:0005524">
    <property type="term" value="F:ATP binding"/>
    <property type="evidence" value="ECO:0007669"/>
    <property type="project" value="UniProtKB-UniRule"/>
</dbReference>
<dbReference type="GO" id="GO:0016887">
    <property type="term" value="F:ATP hydrolysis activity"/>
    <property type="evidence" value="ECO:0007669"/>
    <property type="project" value="InterPro"/>
</dbReference>
<dbReference type="GO" id="GO:0140662">
    <property type="term" value="F:ATP-dependent protein folding chaperone"/>
    <property type="evidence" value="ECO:0007669"/>
    <property type="project" value="InterPro"/>
</dbReference>
<dbReference type="GO" id="GO:0051082">
    <property type="term" value="F:unfolded protein binding"/>
    <property type="evidence" value="ECO:0007669"/>
    <property type="project" value="UniProtKB-UniRule"/>
</dbReference>
<dbReference type="CDD" id="cd16927">
    <property type="entry name" value="HATPase_Hsp90-like"/>
    <property type="match status" value="1"/>
</dbReference>
<dbReference type="FunFam" id="3.30.565.10:FF:000009">
    <property type="entry name" value="Molecular chaperone HtpG"/>
    <property type="match status" value="1"/>
</dbReference>
<dbReference type="Gene3D" id="3.30.230.80">
    <property type="match status" value="1"/>
</dbReference>
<dbReference type="Gene3D" id="3.40.50.11260">
    <property type="match status" value="1"/>
</dbReference>
<dbReference type="Gene3D" id="1.20.120.790">
    <property type="entry name" value="Heat shock protein 90, C-terminal domain"/>
    <property type="match status" value="1"/>
</dbReference>
<dbReference type="Gene3D" id="3.30.565.10">
    <property type="entry name" value="Histidine kinase-like ATPase, C-terminal domain"/>
    <property type="match status" value="1"/>
</dbReference>
<dbReference type="HAMAP" id="MF_00505">
    <property type="entry name" value="HSP90"/>
    <property type="match status" value="1"/>
</dbReference>
<dbReference type="InterPro" id="IPR036890">
    <property type="entry name" value="HATPase_C_sf"/>
</dbReference>
<dbReference type="InterPro" id="IPR019805">
    <property type="entry name" value="Heat_shock_protein_90_CS"/>
</dbReference>
<dbReference type="InterPro" id="IPR037196">
    <property type="entry name" value="HSP90_C"/>
</dbReference>
<dbReference type="InterPro" id="IPR001404">
    <property type="entry name" value="Hsp90_fam"/>
</dbReference>
<dbReference type="InterPro" id="IPR020575">
    <property type="entry name" value="Hsp90_N"/>
</dbReference>
<dbReference type="InterPro" id="IPR020568">
    <property type="entry name" value="Ribosomal_Su5_D2-typ_SF"/>
</dbReference>
<dbReference type="NCBIfam" id="NF003555">
    <property type="entry name" value="PRK05218.1"/>
    <property type="match status" value="1"/>
</dbReference>
<dbReference type="PANTHER" id="PTHR11528">
    <property type="entry name" value="HEAT SHOCK PROTEIN 90 FAMILY MEMBER"/>
    <property type="match status" value="1"/>
</dbReference>
<dbReference type="Pfam" id="PF13589">
    <property type="entry name" value="HATPase_c_3"/>
    <property type="match status" value="1"/>
</dbReference>
<dbReference type="Pfam" id="PF00183">
    <property type="entry name" value="HSP90"/>
    <property type="match status" value="1"/>
</dbReference>
<dbReference type="PIRSF" id="PIRSF002583">
    <property type="entry name" value="Hsp90"/>
    <property type="match status" value="1"/>
</dbReference>
<dbReference type="PRINTS" id="PR00775">
    <property type="entry name" value="HEATSHOCK90"/>
</dbReference>
<dbReference type="SMART" id="SM00387">
    <property type="entry name" value="HATPase_c"/>
    <property type="match status" value="1"/>
</dbReference>
<dbReference type="SUPFAM" id="SSF55874">
    <property type="entry name" value="ATPase domain of HSP90 chaperone/DNA topoisomerase II/histidine kinase"/>
    <property type="match status" value="1"/>
</dbReference>
<dbReference type="SUPFAM" id="SSF110942">
    <property type="entry name" value="HSP90 C-terminal domain"/>
    <property type="match status" value="1"/>
</dbReference>
<dbReference type="SUPFAM" id="SSF54211">
    <property type="entry name" value="Ribosomal protein S5 domain 2-like"/>
    <property type="match status" value="1"/>
</dbReference>
<dbReference type="PROSITE" id="PS00298">
    <property type="entry name" value="HSP90"/>
    <property type="match status" value="1"/>
</dbReference>
<comment type="function">
    <text evidence="1">Molecular chaperone. Has ATPase activity.</text>
</comment>
<comment type="subunit">
    <text evidence="1">Homodimer.</text>
</comment>
<comment type="subcellular location">
    <subcellularLocation>
        <location evidence="1">Cytoplasm</location>
    </subcellularLocation>
</comment>
<comment type="similarity">
    <text evidence="1">Belongs to the heat shock protein 90 family.</text>
</comment>
<gene>
    <name evidence="1" type="primary">htpG</name>
    <name type="ordered locus">RBE_0632</name>
</gene>
<protein>
    <recommendedName>
        <fullName evidence="1">Chaperone protein HtpG</fullName>
    </recommendedName>
    <alternativeName>
        <fullName evidence="1">Heat shock protein HtpG</fullName>
    </alternativeName>
    <alternativeName>
        <fullName evidence="1">High temperature protein G</fullName>
    </alternativeName>
</protein>
<accession>Q1RIV1</accession>
<proteinExistence type="inferred from homology"/>
<reference key="1">
    <citation type="journal article" date="2006" name="PLoS Genet.">
        <title>Genome sequence of Rickettsia bellii illuminates the role of amoebae in gene exchanges between intracellular pathogens.</title>
        <authorList>
            <person name="Ogata H."/>
            <person name="La Scola B."/>
            <person name="Audic S."/>
            <person name="Renesto P."/>
            <person name="Blanc G."/>
            <person name="Robert C."/>
            <person name="Fournier P.-E."/>
            <person name="Claverie J.-M."/>
            <person name="Raoult D."/>
        </authorList>
    </citation>
    <scope>NUCLEOTIDE SEQUENCE [LARGE SCALE GENOMIC DNA]</scope>
    <source>
        <strain>RML369-C</strain>
    </source>
</reference>
<keyword id="KW-0067">ATP-binding</keyword>
<keyword id="KW-0143">Chaperone</keyword>
<keyword id="KW-0963">Cytoplasm</keyword>
<keyword id="KW-0547">Nucleotide-binding</keyword>
<keyword id="KW-0346">Stress response</keyword>
<feature type="chain" id="PRO_0000258525" description="Chaperone protein HtpG">
    <location>
        <begin position="1"/>
        <end position="621"/>
    </location>
</feature>
<feature type="region of interest" description="A; substrate-binding" evidence="1">
    <location>
        <begin position="1"/>
        <end position="328"/>
    </location>
</feature>
<feature type="region of interest" description="B" evidence="1">
    <location>
        <begin position="329"/>
        <end position="544"/>
    </location>
</feature>
<feature type="region of interest" description="Disordered" evidence="2">
    <location>
        <begin position="478"/>
        <end position="498"/>
    </location>
</feature>
<feature type="region of interest" description="C" evidence="1">
    <location>
        <begin position="545"/>
        <end position="621"/>
    </location>
</feature>
<feature type="compositionally biased region" description="Basic and acidic residues" evidence="2">
    <location>
        <begin position="486"/>
        <end position="498"/>
    </location>
</feature>
<evidence type="ECO:0000255" key="1">
    <source>
        <dbReference type="HAMAP-Rule" id="MF_00505"/>
    </source>
</evidence>
<evidence type="ECO:0000256" key="2">
    <source>
        <dbReference type="SAM" id="MobiDB-lite"/>
    </source>
</evidence>